<keyword id="KW-0378">Hydrolase</keyword>
<keyword id="KW-0479">Metal-binding</keyword>
<keyword id="KW-1185">Reference proteome</keyword>
<keyword id="KW-0819">tRNA processing</keyword>
<keyword id="KW-0862">Zinc</keyword>
<reference key="1">
    <citation type="journal article" date="1998" name="EMBO J.">
        <title>Tad1p, a yeast tRNA-specific adenosine deaminase, is related to the mammalian pre-mRNA editing enzymes ADAR1 and ADAR2.</title>
        <authorList>
            <person name="Gerber A."/>
            <person name="Grosjean H."/>
            <person name="Melcher T."/>
            <person name="Keller W."/>
        </authorList>
    </citation>
    <scope>NUCLEOTIDE SEQUENCE [GENOMIC DNA]</scope>
    <scope>CATALYTIC ACTIVITY</scope>
    <scope>CHARACTERIZATION</scope>
    <source>
        <strain>BMA41</strain>
    </source>
</reference>
<reference key="2">
    <citation type="journal article" date="1995" name="Yeast">
        <title>The sequence of an 11.1 kb DNA fragment between ADH4 and ADE5 on the left arm of chromosome VII, reveals the presence of eight open reading frames.</title>
        <authorList>
            <person name="Vandenbol M."/>
            <person name="Durand P."/>
            <person name="Portetelle D."/>
            <person name="Hilger F."/>
        </authorList>
    </citation>
    <scope>NUCLEOTIDE SEQUENCE [GENOMIC DNA]</scope>
    <source>
        <strain>ATCC 204508 / S288c</strain>
    </source>
</reference>
<reference key="3">
    <citation type="journal article" date="1997" name="Nature">
        <title>The nucleotide sequence of Saccharomyces cerevisiae chromosome VII.</title>
        <authorList>
            <person name="Tettelin H."/>
            <person name="Agostoni-Carbone M.L."/>
            <person name="Albermann K."/>
            <person name="Albers M."/>
            <person name="Arroyo J."/>
            <person name="Backes U."/>
            <person name="Barreiros T."/>
            <person name="Bertani I."/>
            <person name="Bjourson A.J."/>
            <person name="Brueckner M."/>
            <person name="Bruschi C.V."/>
            <person name="Carignani G."/>
            <person name="Castagnoli L."/>
            <person name="Cerdan E."/>
            <person name="Clemente M.L."/>
            <person name="Coblenz A."/>
            <person name="Coglievina M."/>
            <person name="Coissac E."/>
            <person name="Defoor E."/>
            <person name="Del Bino S."/>
            <person name="Delius H."/>
            <person name="Delneri D."/>
            <person name="de Wergifosse P."/>
            <person name="Dujon B."/>
            <person name="Durand P."/>
            <person name="Entian K.-D."/>
            <person name="Eraso P."/>
            <person name="Escribano V."/>
            <person name="Fabiani L."/>
            <person name="Fartmann B."/>
            <person name="Feroli F."/>
            <person name="Feuermann M."/>
            <person name="Frontali L."/>
            <person name="Garcia-Gonzalez M."/>
            <person name="Garcia-Saez M.I."/>
            <person name="Goffeau A."/>
            <person name="Guerreiro P."/>
            <person name="Hani J."/>
            <person name="Hansen M."/>
            <person name="Hebling U."/>
            <person name="Hernandez K."/>
            <person name="Heumann K."/>
            <person name="Hilger F."/>
            <person name="Hofmann B."/>
            <person name="Indge K.J."/>
            <person name="James C.M."/>
            <person name="Klima R."/>
            <person name="Koetter P."/>
            <person name="Kramer B."/>
            <person name="Kramer W."/>
            <person name="Lauquin G."/>
            <person name="Leuther H."/>
            <person name="Louis E.J."/>
            <person name="Maillier E."/>
            <person name="Marconi A."/>
            <person name="Martegani E."/>
            <person name="Mazon M.J."/>
            <person name="Mazzoni C."/>
            <person name="McReynolds A.D.K."/>
            <person name="Melchioretto P."/>
            <person name="Mewes H.-W."/>
            <person name="Minenkova O."/>
            <person name="Mueller-Auer S."/>
            <person name="Nawrocki A."/>
            <person name="Netter P."/>
            <person name="Neu R."/>
            <person name="Nombela C."/>
            <person name="Oliver S.G."/>
            <person name="Panzeri L."/>
            <person name="Paoluzi S."/>
            <person name="Plevani P."/>
            <person name="Portetelle D."/>
            <person name="Portillo F."/>
            <person name="Potier S."/>
            <person name="Purnelle B."/>
            <person name="Rieger M."/>
            <person name="Riles L."/>
            <person name="Rinaldi T."/>
            <person name="Robben J."/>
            <person name="Rodrigues-Pousada C."/>
            <person name="Rodriguez-Belmonte E."/>
            <person name="Rodriguez-Torres A.M."/>
            <person name="Rose M."/>
            <person name="Ruzzi M."/>
            <person name="Saliola M."/>
            <person name="Sanchez-Perez M."/>
            <person name="Schaefer B."/>
            <person name="Schaefer M."/>
            <person name="Scharfe M."/>
            <person name="Schmidheini T."/>
            <person name="Schreer A."/>
            <person name="Skala J."/>
            <person name="Souciet J.-L."/>
            <person name="Steensma H.Y."/>
            <person name="Talla E."/>
            <person name="Thierry A."/>
            <person name="Vandenbol M."/>
            <person name="van der Aart Q.J.M."/>
            <person name="Van Dyck L."/>
            <person name="Vanoni M."/>
            <person name="Verhasselt P."/>
            <person name="Voet M."/>
            <person name="Volckaert G."/>
            <person name="Wambutt R."/>
            <person name="Watson M.D."/>
            <person name="Weber N."/>
            <person name="Wedler E."/>
            <person name="Wedler H."/>
            <person name="Wipfli P."/>
            <person name="Wolf K."/>
            <person name="Wright L.F."/>
            <person name="Zaccaria P."/>
            <person name="Zimmermann M."/>
            <person name="Zollner A."/>
            <person name="Kleine K."/>
        </authorList>
    </citation>
    <scope>NUCLEOTIDE SEQUENCE [LARGE SCALE GENOMIC DNA]</scope>
    <source>
        <strain>ATCC 204508 / S288c</strain>
    </source>
</reference>
<reference key="4">
    <citation type="journal article" date="2014" name="G3 (Bethesda)">
        <title>The reference genome sequence of Saccharomyces cerevisiae: Then and now.</title>
        <authorList>
            <person name="Engel S.R."/>
            <person name="Dietrich F.S."/>
            <person name="Fisk D.G."/>
            <person name="Binkley G."/>
            <person name="Balakrishnan R."/>
            <person name="Costanzo M.C."/>
            <person name="Dwight S.S."/>
            <person name="Hitz B.C."/>
            <person name="Karra K."/>
            <person name="Nash R.S."/>
            <person name="Weng S."/>
            <person name="Wong E.D."/>
            <person name="Lloyd P."/>
            <person name="Skrzypek M.S."/>
            <person name="Miyasato S.R."/>
            <person name="Simison M."/>
            <person name="Cherry J.M."/>
        </authorList>
    </citation>
    <scope>GENOME REANNOTATION</scope>
    <source>
        <strain>ATCC 204508 / S288c</strain>
    </source>
</reference>
<reference key="5">
    <citation type="journal article" date="2005" name="Science">
        <title>Inositol hexakisphosphate is bound in the ADAR2 core and required for RNA editing.</title>
        <authorList>
            <person name="Macbeth M.R."/>
            <person name="Schubert H.L."/>
            <person name="Vandemark A.P."/>
            <person name="Lingam A.T."/>
            <person name="Hill C.P."/>
            <person name="Bass B.L."/>
        </authorList>
    </citation>
    <scope>COFACTOR</scope>
</reference>
<evidence type="ECO:0000250" key="1"/>
<evidence type="ECO:0000255" key="2">
    <source>
        <dbReference type="PROSITE-ProRule" id="PRU00240"/>
    </source>
</evidence>
<evidence type="ECO:0000269" key="3">
    <source>
    </source>
</evidence>
<evidence type="ECO:0000269" key="4">
    <source>
    </source>
</evidence>
<evidence type="ECO:0000305" key="5"/>
<proteinExistence type="evidence at protein level"/>
<name>TAD1_YEAST</name>
<accession>P53065</accession>
<accession>D6VV92</accession>
<protein>
    <recommendedName>
        <fullName>tRNA-specific adenosine deaminase 1</fullName>
        <ecNumber>3.5.4.34</ecNumber>
    </recommendedName>
    <alternativeName>
        <fullName>tRNA-specific adenosine-37 deaminase</fullName>
    </alternativeName>
</protein>
<organism>
    <name type="scientific">Saccharomyces cerevisiae (strain ATCC 204508 / S288c)</name>
    <name type="common">Baker's yeast</name>
    <dbReference type="NCBI Taxonomy" id="559292"/>
    <lineage>
        <taxon>Eukaryota</taxon>
        <taxon>Fungi</taxon>
        <taxon>Dikarya</taxon>
        <taxon>Ascomycota</taxon>
        <taxon>Saccharomycotina</taxon>
        <taxon>Saccharomycetes</taxon>
        <taxon>Saccharomycetales</taxon>
        <taxon>Saccharomycetaceae</taxon>
        <taxon>Saccharomyces</taxon>
    </lineage>
</organism>
<feature type="chain" id="PRO_0000171777" description="tRNA-specific adenosine deaminase 1">
    <location>
        <begin position="1"/>
        <end position="400"/>
    </location>
</feature>
<feature type="domain" description="A to I editase" evidence="2">
    <location>
        <begin position="76"/>
        <end position="400"/>
    </location>
</feature>
<feature type="active site" description="Proton donor" evidence="2">
    <location>
        <position position="103"/>
    </location>
</feature>
<feature type="binding site" evidence="2">
    <location>
        <position position="101"/>
    </location>
    <ligand>
        <name>Zn(2+)</name>
        <dbReference type="ChEBI" id="CHEBI:29105"/>
    </ligand>
</feature>
<feature type="binding site" evidence="1">
    <location>
        <position position="108"/>
    </location>
    <ligand>
        <name>1D-myo-inositol hexakisphosphate</name>
        <dbReference type="ChEBI" id="CHEBI:58130"/>
    </ligand>
</feature>
<feature type="binding site" evidence="2">
    <location>
        <position position="157"/>
    </location>
    <ligand>
        <name>Zn(2+)</name>
        <dbReference type="ChEBI" id="CHEBI:29105"/>
    </ligand>
</feature>
<feature type="binding site" evidence="2">
    <location>
        <position position="223"/>
    </location>
    <ligand>
        <name>Zn(2+)</name>
        <dbReference type="ChEBI" id="CHEBI:29105"/>
    </ligand>
</feature>
<feature type="binding site" evidence="1">
    <location>
        <position position="226"/>
    </location>
    <ligand>
        <name>1D-myo-inositol hexakisphosphate</name>
        <dbReference type="ChEBI" id="CHEBI:58130"/>
    </ligand>
</feature>
<feature type="binding site" evidence="1">
    <location>
        <position position="232"/>
    </location>
    <ligand>
        <name>1D-myo-inositol hexakisphosphate</name>
        <dbReference type="ChEBI" id="CHEBI:58130"/>
    </ligand>
</feature>
<feature type="binding site" evidence="1">
    <location>
        <position position="369"/>
    </location>
    <ligand>
        <name>1D-myo-inositol hexakisphosphate</name>
        <dbReference type="ChEBI" id="CHEBI:58130"/>
    </ligand>
</feature>
<feature type="binding site" evidence="1">
    <location>
        <position position="375"/>
    </location>
    <ligand>
        <name>1D-myo-inositol hexakisphosphate</name>
        <dbReference type="ChEBI" id="CHEBI:58130"/>
    </ligand>
</feature>
<comment type="function">
    <text>Deaminates adenosine-37 to inosine in tRNA-Ala.</text>
</comment>
<comment type="catalytic activity">
    <reaction evidence="4">
        <text>adenosine(37) in tRNA(Ala) + H2O + H(+) = inosine(37) in tRNA(Ala) + NH4(+)</text>
        <dbReference type="Rhea" id="RHEA:50968"/>
        <dbReference type="Rhea" id="RHEA-COMP:12855"/>
        <dbReference type="Rhea" id="RHEA-COMP:12856"/>
        <dbReference type="ChEBI" id="CHEBI:15377"/>
        <dbReference type="ChEBI" id="CHEBI:15378"/>
        <dbReference type="ChEBI" id="CHEBI:28938"/>
        <dbReference type="ChEBI" id="CHEBI:74411"/>
        <dbReference type="ChEBI" id="CHEBI:82852"/>
        <dbReference type="EC" id="3.5.4.34"/>
    </reaction>
</comment>
<comment type="cofactor">
    <cofactor evidence="3">
        <name>1D-myo-inositol hexakisphosphate</name>
        <dbReference type="ChEBI" id="CHEBI:58130"/>
    </cofactor>
    <text evidence="3">Binds 1 myo-inositol hexakisphosphate (IP6) per subunit.</text>
</comment>
<comment type="cofactor">
    <cofactor evidence="1">
        <name>Zn(2+)</name>
        <dbReference type="ChEBI" id="CHEBI:29105"/>
    </cofactor>
</comment>
<comment type="similarity">
    <text evidence="5">Belongs to the ADAT1 family.</text>
</comment>
<dbReference type="EC" id="3.5.4.34"/>
<dbReference type="EMBL" id="AJ007297">
    <property type="protein sequence ID" value="CAA07438.1"/>
    <property type="molecule type" value="Genomic_DNA"/>
</dbReference>
<dbReference type="EMBL" id="Z49149">
    <property type="protein sequence ID" value="CAA89012.1"/>
    <property type="molecule type" value="Genomic_DNA"/>
</dbReference>
<dbReference type="EMBL" id="Z72765">
    <property type="protein sequence ID" value="CAA96962.1"/>
    <property type="molecule type" value="Genomic_DNA"/>
</dbReference>
<dbReference type="EMBL" id="BK006941">
    <property type="protein sequence ID" value="DAA07876.1"/>
    <property type="molecule type" value="Genomic_DNA"/>
</dbReference>
<dbReference type="PIR" id="S53937">
    <property type="entry name" value="S53937"/>
</dbReference>
<dbReference type="RefSeq" id="NP_011271.1">
    <property type="nucleotide sequence ID" value="NM_001181109.1"/>
</dbReference>
<dbReference type="SMR" id="P53065"/>
<dbReference type="BioGRID" id="32997">
    <property type="interactions" value="60"/>
</dbReference>
<dbReference type="FunCoup" id="P53065">
    <property type="interactions" value="342"/>
</dbReference>
<dbReference type="STRING" id="4932.YGL243W"/>
<dbReference type="iPTMnet" id="P53065"/>
<dbReference type="PaxDb" id="4932-YGL243W"/>
<dbReference type="PeptideAtlas" id="P53065"/>
<dbReference type="EnsemblFungi" id="YGL243W_mRNA">
    <property type="protein sequence ID" value="YGL243W"/>
    <property type="gene ID" value="YGL243W"/>
</dbReference>
<dbReference type="GeneID" id="852608"/>
<dbReference type="KEGG" id="sce:YGL243W"/>
<dbReference type="AGR" id="SGD:S000003212"/>
<dbReference type="SGD" id="S000003212">
    <property type="gene designation" value="TAD1"/>
</dbReference>
<dbReference type="VEuPathDB" id="FungiDB:YGL243W"/>
<dbReference type="eggNOG" id="KOG2777">
    <property type="taxonomic scope" value="Eukaryota"/>
</dbReference>
<dbReference type="HOGENOM" id="CLU_005382_5_0_1"/>
<dbReference type="InParanoid" id="P53065"/>
<dbReference type="OMA" id="KILHDCH"/>
<dbReference type="OrthoDB" id="10268011at2759"/>
<dbReference type="BioCyc" id="YEAST:YGL243W-MONOMER"/>
<dbReference type="BRENDA" id="3.5.4.34">
    <property type="organism ID" value="984"/>
</dbReference>
<dbReference type="BioGRID-ORCS" id="852608">
    <property type="hits" value="0 hits in 10 CRISPR screens"/>
</dbReference>
<dbReference type="PRO" id="PR:P53065"/>
<dbReference type="Proteomes" id="UP000002311">
    <property type="component" value="Chromosome VII"/>
</dbReference>
<dbReference type="RNAct" id="P53065">
    <property type="molecule type" value="protein"/>
</dbReference>
<dbReference type="GO" id="GO:0005737">
    <property type="term" value="C:cytoplasm"/>
    <property type="evidence" value="ECO:0000304"/>
    <property type="project" value="Reactome"/>
</dbReference>
<dbReference type="GO" id="GO:0005634">
    <property type="term" value="C:nucleus"/>
    <property type="evidence" value="ECO:0007005"/>
    <property type="project" value="SGD"/>
</dbReference>
<dbReference type="GO" id="GO:0046872">
    <property type="term" value="F:metal ion binding"/>
    <property type="evidence" value="ECO:0007669"/>
    <property type="project" value="UniProtKB-KW"/>
</dbReference>
<dbReference type="GO" id="GO:0003723">
    <property type="term" value="F:RNA binding"/>
    <property type="evidence" value="ECO:0007669"/>
    <property type="project" value="InterPro"/>
</dbReference>
<dbReference type="GO" id="GO:0008251">
    <property type="term" value="F:tRNA-specific adenosine deaminase activity"/>
    <property type="evidence" value="ECO:0000269"/>
    <property type="project" value="Reactome"/>
</dbReference>
<dbReference type="GO" id="GO:0043829">
    <property type="term" value="F:tRNA-specific adenosine-37 deaminase activity"/>
    <property type="evidence" value="ECO:0000314"/>
    <property type="project" value="SGD"/>
</dbReference>
<dbReference type="GO" id="GO:0006400">
    <property type="term" value="P:tRNA modification"/>
    <property type="evidence" value="ECO:0000314"/>
    <property type="project" value="SGD"/>
</dbReference>
<dbReference type="GO" id="GO:0002100">
    <property type="term" value="P:tRNA wobble adenosine to inosine editing"/>
    <property type="evidence" value="ECO:0007669"/>
    <property type="project" value="InterPro"/>
</dbReference>
<dbReference type="InterPro" id="IPR002466">
    <property type="entry name" value="A_deamin"/>
</dbReference>
<dbReference type="InterPro" id="IPR042935">
    <property type="entry name" value="Tad1"/>
</dbReference>
<dbReference type="PANTHER" id="PTHR47803">
    <property type="entry name" value="TRNA-SPECIFIC ADENOSINE DEAMINASE 1"/>
    <property type="match status" value="1"/>
</dbReference>
<dbReference type="PANTHER" id="PTHR47803:SF1">
    <property type="entry name" value="TRNA-SPECIFIC ADENOSINE DEAMINASE 1"/>
    <property type="match status" value="1"/>
</dbReference>
<dbReference type="Pfam" id="PF02137">
    <property type="entry name" value="A_deamin"/>
    <property type="match status" value="1"/>
</dbReference>
<dbReference type="SMART" id="SM00552">
    <property type="entry name" value="ADEAMc"/>
    <property type="match status" value="1"/>
</dbReference>
<dbReference type="PROSITE" id="PS50141">
    <property type="entry name" value="A_DEAMIN_EDITASE"/>
    <property type="match status" value="1"/>
</dbReference>
<gene>
    <name type="primary">TAD1</name>
    <name type="ordered locus">YGL243W</name>
    <name type="ORF">HRA400</name>
</gene>
<sequence>MVSCQGTRPCIVNLLTMPSEDKLGEEISTRVINEYSKLKSACRPIIRPSGIREWTILAGVAAINRDGGANKIEILSIATGVKALPDSELQRSEGKILHDCHAEILALRGANTVLLNRIQNYNPSSGDKFIQHNDEIPARFNLKENWELALYISRLPCGDASMSFLNDNCKNDDFIKIEDSDEFQYVDRSVKTILRGRLNFNRRNVVRTKPGRYDSNITLSKSCSDKLLMKQRSSVLNCLNYELFEKPVFLKYIVIPNLEDETKHHLEQSFHTRLPNLDNEIKFLNCLKPFYDDKLDEEDVPGLMCSVKLFMDDFSTEEAILNGVRNGFYTKSSKPLRKHCQSQVSRFAQWELFKKIRPEYEGISYLEFKSRQKKRSQLIIAIKNILSPDGWIPTRTDDVK</sequence>